<name>MRC2_HUMAN</name>
<evidence type="ECO:0000250" key="1"/>
<evidence type="ECO:0000255" key="2"/>
<evidence type="ECO:0000255" key="3">
    <source>
        <dbReference type="PROSITE-ProRule" id="PRU00040"/>
    </source>
</evidence>
<evidence type="ECO:0000255" key="4">
    <source>
        <dbReference type="PROSITE-ProRule" id="PRU00174"/>
    </source>
</evidence>
<evidence type="ECO:0000255" key="5">
    <source>
        <dbReference type="PROSITE-ProRule" id="PRU00479"/>
    </source>
</evidence>
<evidence type="ECO:0000256" key="6">
    <source>
        <dbReference type="SAM" id="MobiDB-lite"/>
    </source>
</evidence>
<evidence type="ECO:0000269" key="7">
    <source>
    </source>
</evidence>
<evidence type="ECO:0000269" key="8">
    <source>
    </source>
</evidence>
<evidence type="ECO:0000269" key="9">
    <source>
    </source>
</evidence>
<evidence type="ECO:0000269" key="10">
    <source>
    </source>
</evidence>
<evidence type="ECO:0000269" key="11">
    <source>
    </source>
</evidence>
<evidence type="ECO:0000269" key="12">
    <source>
    </source>
</evidence>
<evidence type="ECO:0000269" key="13">
    <source>
    </source>
</evidence>
<evidence type="ECO:0000269" key="14">
    <source>
    </source>
</evidence>
<evidence type="ECO:0000269" key="15">
    <source>
    </source>
</evidence>
<evidence type="ECO:0000269" key="16">
    <source>
    </source>
</evidence>
<evidence type="ECO:0000269" key="17">
    <source ref="5"/>
</evidence>
<evidence type="ECO:0000305" key="18"/>
<evidence type="ECO:0007829" key="19">
    <source>
        <dbReference type="PDB" id="5AO5"/>
    </source>
</evidence>
<evidence type="ECO:0007829" key="20">
    <source>
        <dbReference type="PDB" id="5E4L"/>
    </source>
</evidence>
<evidence type="ECO:0007829" key="21">
    <source>
        <dbReference type="PDB" id="5EW6"/>
    </source>
</evidence>
<keyword id="KW-0002">3D-structure</keyword>
<keyword id="KW-0106">Calcium</keyword>
<keyword id="KW-0903">Direct protein sequencing</keyword>
<keyword id="KW-1015">Disulfide bond</keyword>
<keyword id="KW-0254">Endocytosis</keyword>
<keyword id="KW-0325">Glycoprotein</keyword>
<keyword id="KW-1017">Isopeptide bond</keyword>
<keyword id="KW-0430">Lectin</keyword>
<keyword id="KW-0472">Membrane</keyword>
<keyword id="KW-0597">Phosphoprotein</keyword>
<keyword id="KW-1267">Proteomics identification</keyword>
<keyword id="KW-0675">Receptor</keyword>
<keyword id="KW-1185">Reference proteome</keyword>
<keyword id="KW-0677">Repeat</keyword>
<keyword id="KW-0732">Signal</keyword>
<keyword id="KW-0812">Transmembrane</keyword>
<keyword id="KW-1133">Transmembrane helix</keyword>
<keyword id="KW-0832">Ubl conjugation</keyword>
<feature type="signal peptide" evidence="2">
    <location>
        <begin position="1"/>
        <end position="30"/>
    </location>
</feature>
<feature type="chain" id="PRO_0000046078" description="C-type mannose receptor 2">
    <location>
        <begin position="31"/>
        <end position="1479"/>
    </location>
</feature>
<feature type="topological domain" description="Extracellular" evidence="2">
    <location>
        <begin position="31"/>
        <end position="1414"/>
    </location>
</feature>
<feature type="transmembrane region" description="Helical" evidence="2">
    <location>
        <begin position="1415"/>
        <end position="1435"/>
    </location>
</feature>
<feature type="topological domain" description="Cytoplasmic" evidence="2">
    <location>
        <begin position="1436"/>
        <end position="1479"/>
    </location>
</feature>
<feature type="domain" description="Ricin B-type lectin" evidence="4">
    <location>
        <begin position="41"/>
        <end position="167"/>
    </location>
</feature>
<feature type="domain" description="Fibronectin type-II" evidence="5">
    <location>
        <begin position="182"/>
        <end position="230"/>
    </location>
</feature>
<feature type="domain" description="C-type lectin 1" evidence="3">
    <location>
        <begin position="244"/>
        <end position="360"/>
    </location>
</feature>
<feature type="domain" description="C-type lectin 2" evidence="3">
    <location>
        <begin position="389"/>
        <end position="505"/>
    </location>
</feature>
<feature type="domain" description="C-type lectin 3" evidence="3">
    <location>
        <begin position="528"/>
        <end position="644"/>
    </location>
</feature>
<feature type="domain" description="C-type lectin 4" evidence="3">
    <location>
        <begin position="678"/>
        <end position="809"/>
    </location>
</feature>
<feature type="domain" description="C-type lectin 5" evidence="3">
    <location>
        <begin position="832"/>
        <end position="951"/>
    </location>
</feature>
<feature type="domain" description="C-type lectin 6" evidence="3">
    <location>
        <begin position="979"/>
        <end position="1107"/>
    </location>
</feature>
<feature type="domain" description="C-type lectin 7" evidence="3">
    <location>
        <begin position="1132"/>
        <end position="1243"/>
    </location>
</feature>
<feature type="domain" description="C-type lectin 8" evidence="3">
    <location>
        <begin position="1273"/>
        <end position="1393"/>
    </location>
</feature>
<feature type="region of interest" description="Disordered" evidence="6">
    <location>
        <begin position="1450"/>
        <end position="1479"/>
    </location>
</feature>
<feature type="glycosylation site" description="N-linked (GlcNAc...) (complex) asparagine" evidence="13 14">
    <location>
        <position position="69"/>
    </location>
</feature>
<feature type="glycosylation site" description="N-linked (GlcNAc...) asparagine" evidence="2">
    <location>
        <position position="140"/>
    </location>
</feature>
<feature type="glycosylation site" description="N-linked (GlcNAc...) asparagine" evidence="2">
    <location>
        <position position="364"/>
    </location>
</feature>
<feature type="glycosylation site" description="N-linked (GlcNAc...) asparagine" evidence="2">
    <location>
        <position position="588"/>
    </location>
</feature>
<feature type="glycosylation site" description="N-linked (GlcNAc...) asparagine" evidence="2">
    <location>
        <position position="954"/>
    </location>
</feature>
<feature type="glycosylation site" description="N-linked (GlcNAc...) asparagine" evidence="2">
    <location>
        <position position="1029"/>
    </location>
</feature>
<feature type="glycosylation site" description="N-linked (GlcNAc...) asparagine" evidence="2">
    <location>
        <position position="1350"/>
    </location>
</feature>
<feature type="disulfide bond" evidence="1">
    <location>
        <begin position="54"/>
        <end position="68"/>
    </location>
</feature>
<feature type="disulfide bond" evidence="1">
    <location>
        <begin position="93"/>
        <end position="112"/>
    </location>
</feature>
<feature type="disulfide bond" evidence="1">
    <location>
        <begin position="187"/>
        <end position="213"/>
    </location>
</feature>
<feature type="disulfide bond" evidence="1">
    <location>
        <begin position="201"/>
        <end position="228"/>
    </location>
</feature>
<feature type="disulfide bond" evidence="1">
    <location>
        <begin position="266"/>
        <end position="359"/>
    </location>
</feature>
<feature type="disulfide bond" evidence="1">
    <location>
        <begin position="335"/>
        <end position="351"/>
    </location>
</feature>
<feature type="disulfide bond" evidence="1">
    <location>
        <begin position="410"/>
        <end position="504"/>
    </location>
</feature>
<feature type="disulfide bond" evidence="1">
    <location>
        <begin position="481"/>
        <end position="496"/>
    </location>
</feature>
<feature type="disulfide bond" evidence="1">
    <location>
        <begin position="618"/>
        <end position="635"/>
    </location>
</feature>
<feature type="disulfide bond" evidence="1">
    <location>
        <begin position="704"/>
        <end position="808"/>
    </location>
</feature>
<feature type="disulfide bond" evidence="1">
    <location>
        <begin position="785"/>
        <end position="800"/>
    </location>
</feature>
<feature type="disulfide bond" evidence="1">
    <location>
        <begin position="853"/>
        <end position="950"/>
    </location>
</feature>
<feature type="disulfide bond" evidence="1">
    <location>
        <begin position="927"/>
        <end position="942"/>
    </location>
</feature>
<feature type="disulfide bond" evidence="1">
    <location>
        <begin position="1078"/>
        <end position="1098"/>
    </location>
</feature>
<feature type="disulfide bond" evidence="1">
    <location>
        <begin position="1220"/>
        <end position="1234"/>
    </location>
</feature>
<feature type="disulfide bond" evidence="1">
    <location>
        <begin position="1369"/>
        <end position="1384"/>
    </location>
</feature>
<feature type="cross-link" description="Glycyl lysine isopeptide (Lys-Gly) (interchain with G-Cter in SUMO1)">
    <location>
        <position position="1142"/>
    </location>
</feature>
<feature type="sequence variant" id="VAR_025304" description="In dbSNP:rs2014055." evidence="8">
    <original>V</original>
    <variation>I</variation>
    <location>
        <position position="43"/>
    </location>
</feature>
<feature type="sequence variant" id="VAR_025305" description="In dbSNP:rs2429387." evidence="7 8 12 16 17">
    <original>R</original>
    <variation>H</variation>
    <location>
        <position position="1156"/>
    </location>
</feature>
<feature type="mutagenesis site" description="Reduced sugar-binding activity." evidence="10">
    <original>N</original>
    <variation>D</variation>
    <location>
        <position position="472"/>
    </location>
</feature>
<feature type="mutagenesis site" description="No alteration of distribution and trafficking." evidence="9">
    <original>Y</original>
    <variation>A</variation>
    <location>
        <position position="1452"/>
    </location>
</feature>
<feature type="mutagenesis site" description="Increased cell surface distribution." evidence="9">
    <original>E</original>
    <variation>A</variation>
    <location>
        <position position="1464"/>
    </location>
</feature>
<feature type="mutagenesis site" description="Reduction of endocytotic activity; distribution almost restricted to the cell surface." evidence="9">
    <original>LV</original>
    <variation>AA</variation>
    <location>
        <begin position="1468"/>
        <end position="1469"/>
    </location>
</feature>
<feature type="strand" evidence="21">
    <location>
        <begin position="46"/>
        <end position="48"/>
    </location>
</feature>
<feature type="turn" evidence="21">
    <location>
        <begin position="49"/>
        <end position="52"/>
    </location>
</feature>
<feature type="strand" evidence="21">
    <location>
        <begin position="53"/>
        <end position="58"/>
    </location>
</feature>
<feature type="strand" evidence="21">
    <location>
        <begin position="61"/>
        <end position="67"/>
    </location>
</feature>
<feature type="helix" evidence="21">
    <location>
        <begin position="73"/>
        <end position="75"/>
    </location>
</feature>
<feature type="strand" evidence="21">
    <location>
        <begin position="77"/>
        <end position="80"/>
    </location>
</feature>
<feature type="turn" evidence="21">
    <location>
        <begin position="81"/>
        <end position="83"/>
    </location>
</feature>
<feature type="strand" evidence="21">
    <location>
        <begin position="84"/>
        <end position="87"/>
    </location>
</feature>
<feature type="turn" evidence="21">
    <location>
        <begin position="88"/>
        <end position="91"/>
    </location>
</feature>
<feature type="strand" evidence="21">
    <location>
        <begin position="92"/>
        <end position="96"/>
    </location>
</feature>
<feature type="strand" evidence="21">
    <location>
        <begin position="108"/>
        <end position="110"/>
    </location>
</feature>
<feature type="strand" evidence="19">
    <location>
        <begin position="116"/>
        <end position="118"/>
    </location>
</feature>
<feature type="turn" evidence="21">
    <location>
        <begin position="123"/>
        <end position="125"/>
    </location>
</feature>
<feature type="helix" evidence="21">
    <location>
        <begin position="126"/>
        <end position="134"/>
    </location>
</feature>
<feature type="helix" evidence="20">
    <location>
        <begin position="138"/>
        <end position="141"/>
    </location>
</feature>
<feature type="strand" evidence="21">
    <location>
        <begin position="158"/>
        <end position="160"/>
    </location>
</feature>
<feature type="turn" evidence="21">
    <location>
        <begin position="161"/>
        <end position="163"/>
    </location>
</feature>
<feature type="turn" evidence="21">
    <location>
        <begin position="180"/>
        <end position="184"/>
    </location>
</feature>
<feature type="strand" evidence="21">
    <location>
        <begin position="189"/>
        <end position="193"/>
    </location>
</feature>
<feature type="strand" evidence="21">
    <location>
        <begin position="196"/>
        <end position="200"/>
    </location>
</feature>
<feature type="strand" evidence="21">
    <location>
        <begin position="212"/>
        <end position="218"/>
    </location>
</feature>
<feature type="helix" evidence="21">
    <location>
        <begin position="219"/>
        <end position="222"/>
    </location>
</feature>
<feature type="strand" evidence="21">
    <location>
        <begin position="225"/>
        <end position="227"/>
    </location>
</feature>
<feature type="turn" evidence="21">
    <location>
        <begin position="236"/>
        <end position="238"/>
    </location>
</feature>
<feature type="strand" evidence="19">
    <location>
        <begin position="240"/>
        <end position="242"/>
    </location>
</feature>
<feature type="turn" evidence="21">
    <location>
        <begin position="243"/>
        <end position="245"/>
    </location>
</feature>
<feature type="strand" evidence="21">
    <location>
        <begin position="248"/>
        <end position="257"/>
    </location>
</feature>
<feature type="helix" evidence="21">
    <location>
        <begin position="259"/>
        <end position="267"/>
    </location>
</feature>
<feature type="turn" evidence="21">
    <location>
        <begin position="268"/>
        <end position="270"/>
    </location>
</feature>
<feature type="helix" evidence="21">
    <location>
        <begin position="279"/>
        <end position="288"/>
    </location>
</feature>
<feature type="turn" evidence="21">
    <location>
        <begin position="289"/>
        <end position="291"/>
    </location>
</feature>
<feature type="strand" evidence="21">
    <location>
        <begin position="295"/>
        <end position="301"/>
    </location>
</feature>
<feature type="strand" evidence="19">
    <location>
        <begin position="303"/>
        <end position="305"/>
    </location>
</feature>
<feature type="strand" evidence="21">
    <location>
        <begin position="309"/>
        <end position="311"/>
    </location>
</feature>
<feature type="strand" evidence="21">
    <location>
        <begin position="330"/>
        <end position="332"/>
    </location>
</feature>
<feature type="strand" evidence="21">
    <location>
        <begin position="335"/>
        <end position="339"/>
    </location>
</feature>
<feature type="turn" evidence="21">
    <location>
        <begin position="340"/>
        <end position="343"/>
    </location>
</feature>
<feature type="strand" evidence="21">
    <location>
        <begin position="344"/>
        <end position="349"/>
    </location>
</feature>
<feature type="strand" evidence="21">
    <location>
        <begin position="355"/>
        <end position="361"/>
    </location>
</feature>
<feature type="strand" evidence="21">
    <location>
        <begin position="387"/>
        <end position="389"/>
    </location>
</feature>
<feature type="strand" evidence="21">
    <location>
        <begin position="392"/>
        <end position="401"/>
    </location>
</feature>
<feature type="helix" evidence="21">
    <location>
        <begin position="403"/>
        <end position="412"/>
    </location>
</feature>
<feature type="helix" evidence="21">
    <location>
        <begin position="423"/>
        <end position="432"/>
    </location>
</feature>
<feature type="turn" evidence="21">
    <location>
        <begin position="433"/>
        <end position="436"/>
    </location>
</feature>
<feature type="strand" evidence="21">
    <location>
        <begin position="439"/>
        <end position="445"/>
    </location>
</feature>
<feature type="strand" evidence="21">
    <location>
        <begin position="447"/>
        <end position="449"/>
    </location>
</feature>
<feature type="strand" evidence="20">
    <location>
        <begin position="452"/>
        <end position="455"/>
    </location>
</feature>
<feature type="turn" evidence="21">
    <location>
        <begin position="474"/>
        <end position="476"/>
    </location>
</feature>
<feature type="strand" evidence="21">
    <location>
        <begin position="478"/>
        <end position="485"/>
    </location>
</feature>
<feature type="turn" evidence="21">
    <location>
        <begin position="486"/>
        <end position="489"/>
    </location>
</feature>
<feature type="strand" evidence="21">
    <location>
        <begin position="490"/>
        <end position="495"/>
    </location>
</feature>
<feature type="strand" evidence="21">
    <location>
        <begin position="500"/>
        <end position="507"/>
    </location>
</feature>
<gene>
    <name type="primary">MRC2</name>
    <name type="synonym">CLEC13E</name>
    <name type="synonym">ENDO180</name>
    <name type="synonym">KIAA0709</name>
    <name type="synonym">UPARAP</name>
</gene>
<accession>Q9UBG0</accession>
<accession>A6H8K4</accession>
<accession>D3DU08</accession>
<accession>Q7LGE7</accession>
<accession>Q9Y5P9</accession>
<organism>
    <name type="scientific">Homo sapiens</name>
    <name type="common">Human</name>
    <dbReference type="NCBI Taxonomy" id="9606"/>
    <lineage>
        <taxon>Eukaryota</taxon>
        <taxon>Metazoa</taxon>
        <taxon>Chordata</taxon>
        <taxon>Craniata</taxon>
        <taxon>Vertebrata</taxon>
        <taxon>Euteleostomi</taxon>
        <taxon>Mammalia</taxon>
        <taxon>Eutheria</taxon>
        <taxon>Euarchontoglires</taxon>
        <taxon>Primates</taxon>
        <taxon>Haplorrhini</taxon>
        <taxon>Catarrhini</taxon>
        <taxon>Hominidae</taxon>
        <taxon>Homo</taxon>
    </lineage>
</organism>
<proteinExistence type="evidence at protein level"/>
<protein>
    <recommendedName>
        <fullName>C-type mannose receptor 2</fullName>
    </recommendedName>
    <alternativeName>
        <fullName>C-type lectin domain family 13 member E</fullName>
    </alternativeName>
    <alternativeName>
        <fullName>Endocytic receptor 180</fullName>
    </alternativeName>
    <alternativeName>
        <fullName>Macrophage mannose receptor 2</fullName>
    </alternativeName>
    <alternativeName>
        <fullName>Urokinase-type plasminogen activator receptor-associated protein</fullName>
        <shortName>UPAR-associated protein</shortName>
        <shortName>Urokinase receptor-associated protein</shortName>
    </alternativeName>
    <cdAntigenName>CD280</cdAntigenName>
</protein>
<dbReference type="EMBL" id="AF107292">
    <property type="protein sequence ID" value="AAF14192.1"/>
    <property type="molecule type" value="mRNA"/>
</dbReference>
<dbReference type="EMBL" id="AF134838">
    <property type="protein sequence ID" value="AAD30280.1"/>
    <property type="molecule type" value="mRNA"/>
</dbReference>
<dbReference type="EMBL" id="AB014609">
    <property type="protein sequence ID" value="BAA31684.2"/>
    <property type="status" value="ALT_INIT"/>
    <property type="molecule type" value="mRNA"/>
</dbReference>
<dbReference type="EMBL" id="AC080038">
    <property type="status" value="NOT_ANNOTATED_CDS"/>
    <property type="molecule type" value="Genomic_DNA"/>
</dbReference>
<dbReference type="EMBL" id="CH471109">
    <property type="protein sequence ID" value="EAW94341.1"/>
    <property type="molecule type" value="Genomic_DNA"/>
</dbReference>
<dbReference type="EMBL" id="CH471109">
    <property type="protein sequence ID" value="EAW94342.1"/>
    <property type="molecule type" value="Genomic_DNA"/>
</dbReference>
<dbReference type="EMBL" id="BC146647">
    <property type="protein sequence ID" value="AAI46648.1"/>
    <property type="molecule type" value="mRNA"/>
</dbReference>
<dbReference type="EMBL" id="BC150212">
    <property type="protein sequence ID" value="AAI50213.1"/>
    <property type="molecule type" value="mRNA"/>
</dbReference>
<dbReference type="EMBL" id="BC153884">
    <property type="protein sequence ID" value="AAI53885.1"/>
    <property type="molecule type" value="mRNA"/>
</dbReference>
<dbReference type="CCDS" id="CCDS11634.1"/>
<dbReference type="RefSeq" id="NP_006030.2">
    <property type="nucleotide sequence ID" value="NM_006039.5"/>
</dbReference>
<dbReference type="PDB" id="5AO5">
    <property type="method" value="X-ray"/>
    <property type="resolution" value="2.48 A"/>
    <property type="chains" value="A/B=35-511"/>
</dbReference>
<dbReference type="PDB" id="5AO6">
    <property type="method" value="X-ray"/>
    <property type="resolution" value="3.36 A"/>
    <property type="chains" value="A/B=35-511"/>
</dbReference>
<dbReference type="PDB" id="5E4K">
    <property type="method" value="X-ray"/>
    <property type="resolution" value="2.58 A"/>
    <property type="chains" value="A=31-510"/>
</dbReference>
<dbReference type="PDB" id="5E4L">
    <property type="method" value="X-ray"/>
    <property type="resolution" value="2.44 A"/>
    <property type="chains" value="A/B=31-510"/>
</dbReference>
<dbReference type="PDB" id="5EW6">
    <property type="method" value="X-ray"/>
    <property type="resolution" value="2.29 A"/>
    <property type="chains" value="A=31-510"/>
</dbReference>
<dbReference type="PDBsum" id="5AO5"/>
<dbReference type="PDBsum" id="5AO6"/>
<dbReference type="PDBsum" id="5E4K"/>
<dbReference type="PDBsum" id="5E4L"/>
<dbReference type="PDBsum" id="5EW6"/>
<dbReference type="SMR" id="Q9UBG0"/>
<dbReference type="BioGRID" id="115231">
    <property type="interactions" value="77"/>
</dbReference>
<dbReference type="CORUM" id="Q9UBG0"/>
<dbReference type="DIP" id="DIP-37631N"/>
<dbReference type="FunCoup" id="Q9UBG0">
    <property type="interactions" value="634"/>
</dbReference>
<dbReference type="IntAct" id="Q9UBG0">
    <property type="interactions" value="51"/>
</dbReference>
<dbReference type="MINT" id="Q9UBG0"/>
<dbReference type="STRING" id="9606.ENSP00000307513"/>
<dbReference type="UniLectin" id="Q9UBG0"/>
<dbReference type="GlyConnect" id="764">
    <property type="glycosylation" value="17 N-Linked glycans (5 sites)"/>
</dbReference>
<dbReference type="GlyCosmos" id="Q9UBG0">
    <property type="glycosylation" value="10 sites, 16 glycans"/>
</dbReference>
<dbReference type="GlyGen" id="Q9UBG0">
    <property type="glycosylation" value="17 sites, 48 N-linked glycans (9 sites), 2 O-linked glycans (3 sites)"/>
</dbReference>
<dbReference type="iPTMnet" id="Q9UBG0"/>
<dbReference type="PhosphoSitePlus" id="Q9UBG0"/>
<dbReference type="SwissPalm" id="Q9UBG0"/>
<dbReference type="BioMuta" id="MRC2"/>
<dbReference type="DMDM" id="317373394"/>
<dbReference type="jPOST" id="Q9UBG0"/>
<dbReference type="MassIVE" id="Q9UBG0"/>
<dbReference type="PaxDb" id="9606-ENSP00000307513"/>
<dbReference type="PeptideAtlas" id="Q9UBG0"/>
<dbReference type="ProteomicsDB" id="83964"/>
<dbReference type="Pumba" id="Q9UBG0"/>
<dbReference type="Antibodypedia" id="31250">
    <property type="antibodies" value="281 antibodies from 30 providers"/>
</dbReference>
<dbReference type="DNASU" id="9902"/>
<dbReference type="Ensembl" id="ENST00000303375.10">
    <property type="protein sequence ID" value="ENSP00000307513.5"/>
    <property type="gene ID" value="ENSG00000011028.14"/>
</dbReference>
<dbReference type="GeneID" id="9902"/>
<dbReference type="KEGG" id="hsa:9902"/>
<dbReference type="MANE-Select" id="ENST00000303375.10">
    <property type="protein sequence ID" value="ENSP00000307513.5"/>
    <property type="RefSeq nucleotide sequence ID" value="NM_006039.5"/>
    <property type="RefSeq protein sequence ID" value="NP_006030.2"/>
</dbReference>
<dbReference type="UCSC" id="uc002jad.5">
    <property type="organism name" value="human"/>
</dbReference>
<dbReference type="AGR" id="HGNC:16875"/>
<dbReference type="CTD" id="9902"/>
<dbReference type="DisGeNET" id="9902"/>
<dbReference type="GeneCards" id="MRC2"/>
<dbReference type="HGNC" id="HGNC:16875">
    <property type="gene designation" value="MRC2"/>
</dbReference>
<dbReference type="HPA" id="ENSG00000011028">
    <property type="expression patterns" value="Low tissue specificity"/>
</dbReference>
<dbReference type="MIM" id="612264">
    <property type="type" value="gene"/>
</dbReference>
<dbReference type="neXtProt" id="NX_Q9UBG0"/>
<dbReference type="OpenTargets" id="ENSG00000011028"/>
<dbReference type="PharmGKB" id="PA134988161"/>
<dbReference type="VEuPathDB" id="HostDB:ENSG00000011028"/>
<dbReference type="eggNOG" id="KOG4297">
    <property type="taxonomic scope" value="Eukaryota"/>
</dbReference>
<dbReference type="GeneTree" id="ENSGT01050000244842"/>
<dbReference type="HOGENOM" id="CLU_002069_2_0_1"/>
<dbReference type="InParanoid" id="Q9UBG0"/>
<dbReference type="OMA" id="GFIWEHI"/>
<dbReference type="OrthoDB" id="5858677at2759"/>
<dbReference type="PAN-GO" id="Q9UBG0">
    <property type="GO annotations" value="1 GO annotation based on evolutionary models"/>
</dbReference>
<dbReference type="PhylomeDB" id="Q9UBG0"/>
<dbReference type="TreeFam" id="TF316663"/>
<dbReference type="PathwayCommons" id="Q9UBG0"/>
<dbReference type="Reactome" id="R-HSA-1236978">
    <property type="pathway name" value="Cross-presentation of soluble exogenous antigens (endosomes)"/>
</dbReference>
<dbReference type="SignaLink" id="Q9UBG0"/>
<dbReference type="BioGRID-ORCS" id="9902">
    <property type="hits" value="17 hits in 1156 CRISPR screens"/>
</dbReference>
<dbReference type="ChiTaRS" id="MRC2">
    <property type="organism name" value="human"/>
</dbReference>
<dbReference type="EvolutionaryTrace" id="Q9UBG0"/>
<dbReference type="GenomeRNAi" id="9902"/>
<dbReference type="Pharos" id="Q9UBG0">
    <property type="development level" value="Tbio"/>
</dbReference>
<dbReference type="PRO" id="PR:Q9UBG0"/>
<dbReference type="Proteomes" id="UP000005640">
    <property type="component" value="Chromosome 17"/>
</dbReference>
<dbReference type="RNAct" id="Q9UBG0">
    <property type="molecule type" value="protein"/>
</dbReference>
<dbReference type="Bgee" id="ENSG00000011028">
    <property type="expression patterns" value="Expressed in tendon of biceps brachii and 209 other cell types or tissues"/>
</dbReference>
<dbReference type="ExpressionAtlas" id="Q9UBG0">
    <property type="expression patterns" value="baseline and differential"/>
</dbReference>
<dbReference type="GO" id="GO:0005925">
    <property type="term" value="C:focal adhesion"/>
    <property type="evidence" value="ECO:0007005"/>
    <property type="project" value="UniProtKB"/>
</dbReference>
<dbReference type="GO" id="GO:0016020">
    <property type="term" value="C:membrane"/>
    <property type="evidence" value="ECO:0007005"/>
    <property type="project" value="UniProtKB"/>
</dbReference>
<dbReference type="GO" id="GO:0030246">
    <property type="term" value="F:carbohydrate binding"/>
    <property type="evidence" value="ECO:0007669"/>
    <property type="project" value="UniProtKB-KW"/>
</dbReference>
<dbReference type="GO" id="GO:0005518">
    <property type="term" value="F:collagen binding"/>
    <property type="evidence" value="ECO:0000314"/>
    <property type="project" value="UniProtKB"/>
</dbReference>
<dbReference type="GO" id="GO:0038023">
    <property type="term" value="F:signaling receptor activity"/>
    <property type="evidence" value="ECO:0000318"/>
    <property type="project" value="GO_Central"/>
</dbReference>
<dbReference type="GO" id="GO:0030574">
    <property type="term" value="P:collagen catabolic process"/>
    <property type="evidence" value="ECO:0000314"/>
    <property type="project" value="UniProtKB"/>
</dbReference>
<dbReference type="GO" id="GO:0006897">
    <property type="term" value="P:endocytosis"/>
    <property type="evidence" value="ECO:0007669"/>
    <property type="project" value="UniProtKB-KW"/>
</dbReference>
<dbReference type="GO" id="GO:0001649">
    <property type="term" value="P:osteoblast differentiation"/>
    <property type="evidence" value="ECO:0007005"/>
    <property type="project" value="UniProtKB"/>
</dbReference>
<dbReference type="CDD" id="cd23408">
    <property type="entry name" value="beta-trefoil_Ricin_MRC2"/>
    <property type="match status" value="1"/>
</dbReference>
<dbReference type="CDD" id="cd00037">
    <property type="entry name" value="CLECT"/>
    <property type="match status" value="7"/>
</dbReference>
<dbReference type="CDD" id="cd03590">
    <property type="entry name" value="CLECT_DC-SIGN_like"/>
    <property type="match status" value="1"/>
</dbReference>
<dbReference type="CDD" id="cd00062">
    <property type="entry name" value="FN2"/>
    <property type="match status" value="1"/>
</dbReference>
<dbReference type="FunFam" id="3.10.100.10:FF:000026">
    <property type="entry name" value="C-type mannose receptor 2"/>
    <property type="match status" value="1"/>
</dbReference>
<dbReference type="FunFam" id="3.10.100.10:FF:000035">
    <property type="entry name" value="C-type mannose receptor 2"/>
    <property type="match status" value="1"/>
</dbReference>
<dbReference type="FunFam" id="2.10.10.10:FF:000001">
    <property type="entry name" value="Fibronectin 1a isoform 1"/>
    <property type="match status" value="1"/>
</dbReference>
<dbReference type="FunFam" id="2.80.10.50:FF:000035">
    <property type="entry name" value="Mannose receptor C type 2"/>
    <property type="match status" value="1"/>
</dbReference>
<dbReference type="FunFam" id="3.10.100.10:FF:000019">
    <property type="entry name" value="Mannose receptor C type 2"/>
    <property type="match status" value="1"/>
</dbReference>
<dbReference type="FunFam" id="3.10.100.10:FF:000020">
    <property type="entry name" value="Mannose receptor C type 2"/>
    <property type="match status" value="1"/>
</dbReference>
<dbReference type="FunFam" id="3.10.100.10:FF:000021">
    <property type="entry name" value="Mannose receptor C type 2"/>
    <property type="match status" value="1"/>
</dbReference>
<dbReference type="FunFam" id="3.10.100.10:FF:000029">
    <property type="entry name" value="Mannose receptor C type 2"/>
    <property type="match status" value="1"/>
</dbReference>
<dbReference type="FunFam" id="3.10.100.10:FF:000033">
    <property type="entry name" value="Mannose receptor C type 2"/>
    <property type="match status" value="1"/>
</dbReference>
<dbReference type="FunFam" id="3.10.100.10:FF:000018">
    <property type="entry name" value="Mannose receptor, C type 2"/>
    <property type="match status" value="1"/>
</dbReference>
<dbReference type="Gene3D" id="2.80.10.50">
    <property type="match status" value="1"/>
</dbReference>
<dbReference type="Gene3D" id="2.10.10.10">
    <property type="entry name" value="Fibronectin, type II, collagen-binding"/>
    <property type="match status" value="1"/>
</dbReference>
<dbReference type="Gene3D" id="3.10.100.10">
    <property type="entry name" value="Mannose-Binding Protein A, subunit A"/>
    <property type="match status" value="8"/>
</dbReference>
<dbReference type="InterPro" id="IPR001304">
    <property type="entry name" value="C-type_lectin-like"/>
</dbReference>
<dbReference type="InterPro" id="IPR016186">
    <property type="entry name" value="C-type_lectin-like/link_sf"/>
</dbReference>
<dbReference type="InterPro" id="IPR050111">
    <property type="entry name" value="C-type_lectin/snaclec_domain"/>
</dbReference>
<dbReference type="InterPro" id="IPR018378">
    <property type="entry name" value="C-type_lectin_CS"/>
</dbReference>
<dbReference type="InterPro" id="IPR033989">
    <property type="entry name" value="CD209-like_CTLD"/>
</dbReference>
<dbReference type="InterPro" id="IPR016187">
    <property type="entry name" value="CTDL_fold"/>
</dbReference>
<dbReference type="InterPro" id="IPR000562">
    <property type="entry name" value="FN_type2_dom"/>
</dbReference>
<dbReference type="InterPro" id="IPR036943">
    <property type="entry name" value="FN_type2_sf"/>
</dbReference>
<dbReference type="InterPro" id="IPR013806">
    <property type="entry name" value="Kringle-like"/>
</dbReference>
<dbReference type="InterPro" id="IPR035992">
    <property type="entry name" value="Ricin_B-like_lectins"/>
</dbReference>
<dbReference type="InterPro" id="IPR000772">
    <property type="entry name" value="Ricin_B_lectin"/>
</dbReference>
<dbReference type="PANTHER" id="PTHR22803">
    <property type="entry name" value="MANNOSE, PHOSPHOLIPASE, LECTIN RECEPTOR RELATED"/>
    <property type="match status" value="1"/>
</dbReference>
<dbReference type="Pfam" id="PF24562">
    <property type="entry name" value="CysR_MRC2_N"/>
    <property type="match status" value="1"/>
</dbReference>
<dbReference type="Pfam" id="PF00040">
    <property type="entry name" value="fn2"/>
    <property type="match status" value="1"/>
</dbReference>
<dbReference type="Pfam" id="PF00059">
    <property type="entry name" value="Lectin_C"/>
    <property type="match status" value="8"/>
</dbReference>
<dbReference type="PRINTS" id="PR00013">
    <property type="entry name" value="FNTYPEII"/>
</dbReference>
<dbReference type="SMART" id="SM00034">
    <property type="entry name" value="CLECT"/>
    <property type="match status" value="8"/>
</dbReference>
<dbReference type="SMART" id="SM00059">
    <property type="entry name" value="FN2"/>
    <property type="match status" value="1"/>
</dbReference>
<dbReference type="SMART" id="SM00458">
    <property type="entry name" value="RICIN"/>
    <property type="match status" value="1"/>
</dbReference>
<dbReference type="SUPFAM" id="SSF56436">
    <property type="entry name" value="C-type lectin-like"/>
    <property type="match status" value="8"/>
</dbReference>
<dbReference type="SUPFAM" id="SSF57440">
    <property type="entry name" value="Kringle-like"/>
    <property type="match status" value="1"/>
</dbReference>
<dbReference type="SUPFAM" id="SSF50370">
    <property type="entry name" value="Ricin B-like lectins"/>
    <property type="match status" value="1"/>
</dbReference>
<dbReference type="PROSITE" id="PS00615">
    <property type="entry name" value="C_TYPE_LECTIN_1"/>
    <property type="match status" value="3"/>
</dbReference>
<dbReference type="PROSITE" id="PS50041">
    <property type="entry name" value="C_TYPE_LECTIN_2"/>
    <property type="match status" value="8"/>
</dbReference>
<dbReference type="PROSITE" id="PS00023">
    <property type="entry name" value="FN2_1"/>
    <property type="match status" value="1"/>
</dbReference>
<dbReference type="PROSITE" id="PS51092">
    <property type="entry name" value="FN2_2"/>
    <property type="match status" value="1"/>
</dbReference>
<dbReference type="PROSITE" id="PS50231">
    <property type="entry name" value="RICIN_B_LECTIN"/>
    <property type="match status" value="1"/>
</dbReference>
<sequence>MGPGRPAPAPWPRHLLRCVLLLGCLHLGRPGAPGDAALPEPNVFLIFSHGLQGCLEAQGGQVRVTPACNTSLPAQRWKWVSRNRLFNLGTMQCLGTGWPGTNTTASLGMYECDREALNLRWHCRTLGDQLSLLLGARTSNISKPGTLERGDQTRSGQWRIYGSEEDLCALPYHEVYTIQGNSHGKPCTIPFKYDNQWFHGCTSTGREDGHLWCATTQDYGKDERWGFCPIKSNDCETFWDKDQLTDSCYQFNFQSTLSWREAWASCEQQGADLLSITEIHEQTYINGLLTGYSSTLWIGLNDLDTSGGWQWSDNSPLKYLNWESDQPDNPSEENCGVIRTESSGGWQNRDCSIALPYVCKKKPNATAEPTPPDRWANVKVECEPSWQPFQGHCYRLQAEKRSWQESKKACLRGGGDLVSIHSMAELEFITKQIKQEVEELWIGLNDLKLQMNFEWSDGSLVSFTHWHPFEPNNFRDSLEDCVTIWGPEGRWNDSPCNQSLPSICKKAGQLSQGAAEEDHGCRKGWTWHSPSCYWLGEDQVTYSEARRLCTDHGSQLVTITNRFEQAFVSSLIYNWEGEYFWTALQDLNSTGSFFWLSGDEVMYTHWNRDQPGYSRGGCVALATGSAMGLWEVKNCTSFRARYICRQSLGTPVTPELPGPDPTPSLTGSCPQGWASDTKLRYCYKVFSSERLQDKKSWVQAQGACQELGAQLLSLASYEEEHFVANMLNKIFGESEPEIHEQHWFWIGLNRRDPRGGQSWRWSDGVGFSYHNFDRSRHDDDDIRGCAVLDLASLQWVAMQCDTQLDWICKIPRGTDVREPDDSPQGRREWLRFQEAEYKFFEHHSTWAQAQRICTWFQAELTSVHSQAELDFLSHNLQKFSRAQEQHWWIGLHTSESDGRFRWTDGSIINFISWAPGKPRPVGKDKKCVYMTASREDWGDQRCLTALPYICKRSNVTKETQPPDLPTTALGGCPSDWIQFLNKCFQVQGQEPQSRVKWSEAQFSCEQQEAQLVTITNPLEQAFITASLPNVTFDLWIGLHASQRDFQWVEQEPLMYANWAPGEPSGPSPAPSGNKPTSCAVVLHSPSAHFTGRWDDRSCTEETHGFICQKGTDPSLSPSPAALPPAPGTELSYLNGTFRLLQKPLRWHDALLLCESRNASLAYVPDPYTQAFLTQAARGLRTPLWIGLAGEEGSRRYSWVSEEPLNYVGWQDGEPQQPGGCTYVDVDGAWRTTSCDTKLQGAVCGVSSGPPPPRRISYHGSCPQGLADSAWIPFREHCYSFHMELLLGHKEARQRCQRAGGAVLSILDEMENVFVWEHLQSYEGQSRGAWLGMNFNPKGGTLVWQDNTAVNYSNWGPPGLGPSMLSHNSCYWIQSNSGLWRPGACTNITMGVVCKLPRAEQSSFSPSALPENPAALVVVLMAVLLLLALLTAALILYRRRQSIERGAFEGARYSRSSSSPTEATEKNILVSDMEMNEQQE</sequence>
<comment type="function">
    <text evidence="8 11">May play a role as endocytotic lectin receptor displaying calcium-dependent lectin activity. Internalizes glycosylated ligands from the extracellular space for release in an endosomal compartment via clathrin-mediated endocytosis. May be involved in plasminogen activation system controlling the extracellular level of PLAUR/PLAU, and thus may regulate protease activity at the cell surface. May contribute to cellular uptake, remodeling and degradation of extracellular collagen matrices. May play a role during cancer progression as well as in other chronic tissue destructive diseases acting on collagen turnover. May participate in remodeling of extracellular matrix cooperating with the matrix metalloproteinases (MMPs).</text>
</comment>
<comment type="subunit">
    <text evidence="1 7">Interacts with C-terminal region of type I collagen/COL1A1 (By similarity). Interacts directly with PLAUR/UPAR and PLAU/pro-UPA to form a tri-molecular complex. Interacts with collagen V.</text>
</comment>
<comment type="interaction">
    <interactant intactId="EBI-1104992">
        <id>Q9UBG0</id>
    </interactant>
    <interactant intactId="EBI-915744">
        <id>P02454</id>
        <label>Col1a1</label>
    </interactant>
    <organismsDiffer>true</organismsDiffer>
    <experiments>2</experiments>
</comment>
<comment type="subcellular location">
    <subcellularLocation>
        <location>Membrane</location>
        <topology>Single-pass type I membrane protein</topology>
    </subcellularLocation>
</comment>
<comment type="tissue specificity">
    <text evidence="8 15">Ubiquitous with low expression in brain, placenta, lung, kidney, pancreas, spleen, thymus and colon. Expressed in endothelial cells, fibroblasts and macrophages. Highly expressed in fetal lung and kidney.</text>
</comment>
<comment type="domain">
    <text>C-type lectin domains 3 to 8 are not required for calcium-dependent binding of mannose, fucose and N-acetylglucosamine. C-type lectin domain 2 is responsible for sugar-binding in a calcium-dependent manner.</text>
</comment>
<comment type="domain">
    <text>Fibronectin type-II domain mediates collagen-binding.</text>
</comment>
<comment type="domain">
    <text evidence="1">Ricin B-type lectin domain contacts with the second C-type lectin domain.</text>
</comment>
<comment type="PTM">
    <text evidence="8 13 14">N-glycosylated.</text>
</comment>
<comment type="sequence caution" evidence="18">
    <conflict type="erroneous initiation">
        <sequence resource="EMBL-CDS" id="BAA31684"/>
    </conflict>
    <text>Extended N-terminus.</text>
</comment>
<comment type="online information" name="Functional Glycomics Gateway - Glycan Binding">
    <link uri="http://www.functionalglycomics.org/glycomics/GBPServlet?&amp;operationType=view&amp;cbpId=cbp_hum_Ctlect_251"/>
    <text>Endo180</text>
</comment>
<reference key="1">
    <citation type="journal article" date="2000" name="J. Biol. Chem.">
        <title>A urokinase receptor-associated protein with specific collagen binding properties.</title>
        <authorList>
            <person name="Behrendt N."/>
            <person name="Jensen O.N."/>
            <person name="Engelholm L.H."/>
            <person name="Moertz E."/>
            <person name="Mann M."/>
            <person name="Danoe K."/>
        </authorList>
    </citation>
    <scope>NUCLEOTIDE SEQUENCE [MRNA]</scope>
    <scope>PROTEIN SEQUENCE OF 350-360</scope>
    <scope>IDENTIFICATION BY MASS SPECTROMETRY</scope>
    <scope>SUBUNIT</scope>
    <scope>VARIANT HIS-1156</scope>
</reference>
<reference key="2">
    <citation type="journal article" date="2000" name="J. Cell Sci.">
        <title>Endo180, an endocytic recycling glycoprotein related to the macrophage mannose receptor is expressed on fibroblasts, endothelial cells and macrophages and functions as a lectin receptor.</title>
        <authorList>
            <person name="Sheikh H."/>
            <person name="Yarwood H."/>
            <person name="Ashworth A."/>
            <person name="Isacke C.M."/>
        </authorList>
    </citation>
    <scope>NUCLEOTIDE SEQUENCE [MRNA]</scope>
    <scope>FUNCTION</scope>
    <scope>PHOSPHORYLATION</scope>
    <scope>GLYCOSYLATION</scope>
    <scope>TISSUE SPECIFICITY</scope>
    <scope>VARIANTS ILE-43 AND HIS-1156</scope>
</reference>
<reference key="3">
    <citation type="journal article" date="1998" name="DNA Res.">
        <title>Prediction of the coding sequences of unidentified human genes. X. The complete sequences of 100 new cDNA clones from brain which can code for large proteins in vitro.</title>
        <authorList>
            <person name="Ishikawa K."/>
            <person name="Nagase T."/>
            <person name="Suyama M."/>
            <person name="Miyajima N."/>
            <person name="Tanaka A."/>
            <person name="Kotani H."/>
            <person name="Nomura N."/>
            <person name="Ohara O."/>
        </authorList>
    </citation>
    <scope>NUCLEOTIDE SEQUENCE [LARGE SCALE MRNA]</scope>
    <scope>VARIANT HIS-1156</scope>
    <source>
        <tissue>Brain</tissue>
    </source>
</reference>
<reference key="4">
    <citation type="journal article" date="2006" name="Nature">
        <title>DNA sequence of human chromosome 17 and analysis of rearrangement in the human lineage.</title>
        <authorList>
            <person name="Zody M.C."/>
            <person name="Garber M."/>
            <person name="Adams D.J."/>
            <person name="Sharpe T."/>
            <person name="Harrow J."/>
            <person name="Lupski J.R."/>
            <person name="Nicholson C."/>
            <person name="Searle S.M."/>
            <person name="Wilming L."/>
            <person name="Young S.K."/>
            <person name="Abouelleil A."/>
            <person name="Allen N.R."/>
            <person name="Bi W."/>
            <person name="Bloom T."/>
            <person name="Borowsky M.L."/>
            <person name="Bugalter B.E."/>
            <person name="Butler J."/>
            <person name="Chang J.L."/>
            <person name="Chen C.-K."/>
            <person name="Cook A."/>
            <person name="Corum B."/>
            <person name="Cuomo C.A."/>
            <person name="de Jong P.J."/>
            <person name="DeCaprio D."/>
            <person name="Dewar K."/>
            <person name="FitzGerald M."/>
            <person name="Gilbert J."/>
            <person name="Gibson R."/>
            <person name="Gnerre S."/>
            <person name="Goldstein S."/>
            <person name="Grafham D.V."/>
            <person name="Grocock R."/>
            <person name="Hafez N."/>
            <person name="Hagopian D.S."/>
            <person name="Hart E."/>
            <person name="Norman C.H."/>
            <person name="Humphray S."/>
            <person name="Jaffe D.B."/>
            <person name="Jones M."/>
            <person name="Kamal M."/>
            <person name="Khodiyar V.K."/>
            <person name="LaButti K."/>
            <person name="Laird G."/>
            <person name="Lehoczky J."/>
            <person name="Liu X."/>
            <person name="Lokyitsang T."/>
            <person name="Loveland J."/>
            <person name="Lui A."/>
            <person name="Macdonald P."/>
            <person name="Major J.E."/>
            <person name="Matthews L."/>
            <person name="Mauceli E."/>
            <person name="McCarroll S.A."/>
            <person name="Mihalev A.H."/>
            <person name="Mudge J."/>
            <person name="Nguyen C."/>
            <person name="Nicol R."/>
            <person name="O'Leary S.B."/>
            <person name="Osoegawa K."/>
            <person name="Schwartz D.C."/>
            <person name="Shaw-Smith C."/>
            <person name="Stankiewicz P."/>
            <person name="Steward C."/>
            <person name="Swarbreck D."/>
            <person name="Venkataraman V."/>
            <person name="Whittaker C.A."/>
            <person name="Yang X."/>
            <person name="Zimmer A.R."/>
            <person name="Bradley A."/>
            <person name="Hubbard T."/>
            <person name="Birren B.W."/>
            <person name="Rogers J."/>
            <person name="Lander E.S."/>
            <person name="Nusbaum C."/>
        </authorList>
    </citation>
    <scope>NUCLEOTIDE SEQUENCE [LARGE SCALE GENOMIC DNA]</scope>
</reference>
<reference key="5">
    <citation type="submission" date="2005-09" db="EMBL/GenBank/DDBJ databases">
        <authorList>
            <person name="Mural R.J."/>
            <person name="Istrail S."/>
            <person name="Sutton G.G."/>
            <person name="Florea L."/>
            <person name="Halpern A.L."/>
            <person name="Mobarry C.M."/>
            <person name="Lippert R."/>
            <person name="Walenz B."/>
            <person name="Shatkay H."/>
            <person name="Dew I."/>
            <person name="Miller J.R."/>
            <person name="Flanigan M.J."/>
            <person name="Edwards N.J."/>
            <person name="Bolanos R."/>
            <person name="Fasulo D."/>
            <person name="Halldorsson B.V."/>
            <person name="Hannenhalli S."/>
            <person name="Turner R."/>
            <person name="Yooseph S."/>
            <person name="Lu F."/>
            <person name="Nusskern D.R."/>
            <person name="Shue B.C."/>
            <person name="Zheng X.H."/>
            <person name="Zhong F."/>
            <person name="Delcher A.L."/>
            <person name="Huson D.H."/>
            <person name="Kravitz S.A."/>
            <person name="Mouchard L."/>
            <person name="Reinert K."/>
            <person name="Remington K.A."/>
            <person name="Clark A.G."/>
            <person name="Waterman M.S."/>
            <person name="Eichler E.E."/>
            <person name="Adams M.D."/>
            <person name="Hunkapiller M.W."/>
            <person name="Myers E.W."/>
            <person name="Venter J.C."/>
        </authorList>
    </citation>
    <scope>NUCLEOTIDE SEQUENCE [LARGE SCALE GENOMIC DNA]</scope>
    <scope>VARIANT HIS-1156</scope>
</reference>
<reference key="6">
    <citation type="journal article" date="2004" name="Genome Res.">
        <title>The status, quality, and expansion of the NIH full-length cDNA project: the Mammalian Gene Collection (MGC).</title>
        <authorList>
            <consortium name="The MGC Project Team"/>
        </authorList>
    </citation>
    <scope>NUCLEOTIDE SEQUENCE [LARGE SCALE MRNA]</scope>
    <scope>VARIANT HIS-1156</scope>
</reference>
<reference key="7">
    <citation type="journal article" date="1996" name="J. Biol. Chem.">
        <title>Characterization of a novel member of the macrophage mannose receptor type C lectin family.</title>
        <authorList>
            <person name="Wu K."/>
            <person name="Yuan J."/>
            <person name="Lasky L.A."/>
        </authorList>
    </citation>
    <scope>TISSUE SPECIFICITY</scope>
</reference>
<reference key="8">
    <citation type="journal article" date="2002" name="J. Biol. Chem.">
        <title>The C-type lectin receptor Endo180 displays internalization and recycling properties distinct from other members of the mannose receptor family.</title>
        <authorList>
            <person name="Howard M.J."/>
            <person name="Isacke C.M."/>
        </authorList>
    </citation>
    <scope>MUTAGENESIS OF TYR-1452; GLU-1464 AND 1468-LEU-VAL-1469</scope>
</reference>
<reference key="9">
    <citation type="journal article" date="2002" name="J. Biol. Chem.">
        <title>Characterization of sugar binding by the mannose receptor family member, Endo180.</title>
        <authorList>
            <person name="East L."/>
            <person name="Rushton S."/>
            <person name="Taylor M.E."/>
            <person name="Isacke C.M."/>
        </authorList>
    </citation>
    <scope>DOMAIN</scope>
    <scope>MUTAGENESIS OF ASN-472</scope>
</reference>
<reference key="10">
    <citation type="journal article" date="2003" name="Mol. Biol. Cell">
        <title>Identification and characterization of the endocytic transmembrane glycoprotein Endo180 as a novel collagen receptor.</title>
        <authorList>
            <person name="Wienke D."/>
            <person name="MacFadyen J.R."/>
            <person name="Isacke C.M."/>
        </authorList>
    </citation>
    <scope>FUNCTION</scope>
    <scope>DOMAIN</scope>
</reference>
<reference key="11">
    <citation type="journal article" date="2009" name="J. Proteome Res.">
        <title>Glycoproteomics analysis of human liver tissue by combination of multiple enzyme digestion and hydrazide chemistry.</title>
        <authorList>
            <person name="Chen R."/>
            <person name="Jiang X."/>
            <person name="Sun D."/>
            <person name="Han G."/>
            <person name="Wang F."/>
            <person name="Ye M."/>
            <person name="Wang L."/>
            <person name="Zou H."/>
        </authorList>
    </citation>
    <scope>GLYCOSYLATION [LARGE SCALE ANALYSIS] AT ASN-69</scope>
    <source>
        <tissue>Liver</tissue>
    </source>
</reference>
<reference key="12">
    <citation type="journal article" date="2009" name="Mol. Cell. Proteomics">
        <title>A strategy for precise and large scale identification of core fucosylated glycoproteins.</title>
        <authorList>
            <person name="Jia W."/>
            <person name="Lu Z."/>
            <person name="Fu Y."/>
            <person name="Wang H.P."/>
            <person name="Wang L.H."/>
            <person name="Chi H."/>
            <person name="Yuan Z.F."/>
            <person name="Zheng Z.B."/>
            <person name="Song L.N."/>
            <person name="Han H.H."/>
            <person name="Liang Y.M."/>
            <person name="Wang J.L."/>
            <person name="Cai Y."/>
            <person name="Zhang Y.K."/>
            <person name="Deng Y.L."/>
            <person name="Ying W.T."/>
            <person name="He S.M."/>
            <person name="Qian X.H."/>
        </authorList>
    </citation>
    <scope>GLYCOSYLATION AT ASN-69</scope>
</reference>
<reference key="13">
    <citation type="journal article" date="2010" name="J. Biol. Chem.">
        <title>In vivo identification of sumoylation sites by a signature tag and cysteine-targeted affinity purification.</title>
        <authorList>
            <person name="Blomster H.A."/>
            <person name="Imanishi S.Y."/>
            <person name="Siimes J."/>
            <person name="Kastu J."/>
            <person name="Morrice N.A."/>
            <person name="Eriksson J.E."/>
            <person name="Sistonen L."/>
        </authorList>
    </citation>
    <scope>SUMOYLATION AT LYS-1142</scope>
    <source>
        <tissue>Cervix carcinoma</tissue>
    </source>
</reference>
<reference key="14">
    <citation type="journal article" date="2015" name="Proteomics">
        <title>N-terminome analysis of the human mitochondrial proteome.</title>
        <authorList>
            <person name="Vaca Jacome A.S."/>
            <person name="Rabilloud T."/>
            <person name="Schaeffer-Reiss C."/>
            <person name="Rompais M."/>
            <person name="Ayoub D."/>
            <person name="Lane L."/>
            <person name="Bairoch A."/>
            <person name="Van Dorsselaer A."/>
            <person name="Carapito C."/>
        </authorList>
    </citation>
    <scope>IDENTIFICATION BY MASS SPECTROMETRY [LARGE SCALE ANALYSIS]</scope>
</reference>